<proteinExistence type="inferred from homology"/>
<reference key="1">
    <citation type="journal article" date="2005" name="Genome Res.">
        <title>The Chlamydophila abortus genome sequence reveals an array of variable proteins that contribute to interspecies variation.</title>
        <authorList>
            <person name="Thomson N.R."/>
            <person name="Yeats C."/>
            <person name="Bell K."/>
            <person name="Holden M.T.G."/>
            <person name="Bentley S.D."/>
            <person name="Livingstone M."/>
            <person name="Cerdeno-Tarraga A.-M."/>
            <person name="Harris B."/>
            <person name="Doggett J."/>
            <person name="Ormond D."/>
            <person name="Mungall K."/>
            <person name="Clarke K."/>
            <person name="Feltwell T."/>
            <person name="Hance Z."/>
            <person name="Sanders M."/>
            <person name="Quail M.A."/>
            <person name="Price C."/>
            <person name="Barrell B.G."/>
            <person name="Parkhill J."/>
            <person name="Longbottom D."/>
        </authorList>
    </citation>
    <scope>NUCLEOTIDE SEQUENCE [LARGE SCALE GENOMIC DNA]</scope>
    <source>
        <strain>DSM 27085 / S26/3</strain>
    </source>
</reference>
<keyword id="KW-0560">Oxidoreductase</keyword>
<keyword id="KW-0819">tRNA processing</keyword>
<feature type="chain" id="PRO_0000161461" description="tRNA uridine(34) hydroxylase">
    <location>
        <begin position="1"/>
        <end position="326"/>
    </location>
</feature>
<feature type="domain" description="Rhodanese" evidence="1">
    <location>
        <begin position="122"/>
        <end position="218"/>
    </location>
</feature>
<feature type="active site" description="Cysteine persulfide intermediate" evidence="1">
    <location>
        <position position="178"/>
    </location>
</feature>
<name>TRHO_CHLAB</name>
<comment type="function">
    <text evidence="1">Catalyzes oxygen-dependent 5-hydroxyuridine (ho5U) modification at position 34 in tRNAs.</text>
</comment>
<comment type="catalytic activity">
    <reaction evidence="1">
        <text>uridine(34) in tRNA + AH2 + O2 = 5-hydroxyuridine(34) in tRNA + A + H2O</text>
        <dbReference type="Rhea" id="RHEA:64224"/>
        <dbReference type="Rhea" id="RHEA-COMP:11727"/>
        <dbReference type="Rhea" id="RHEA-COMP:13381"/>
        <dbReference type="ChEBI" id="CHEBI:13193"/>
        <dbReference type="ChEBI" id="CHEBI:15377"/>
        <dbReference type="ChEBI" id="CHEBI:15379"/>
        <dbReference type="ChEBI" id="CHEBI:17499"/>
        <dbReference type="ChEBI" id="CHEBI:65315"/>
        <dbReference type="ChEBI" id="CHEBI:136877"/>
    </reaction>
</comment>
<comment type="similarity">
    <text evidence="1">Belongs to the TrhO family.</text>
</comment>
<gene>
    <name evidence="1" type="primary">trhO</name>
    <name type="ordered locus">CAB010</name>
</gene>
<organism>
    <name type="scientific">Chlamydia abortus (strain DSM 27085 / S26/3)</name>
    <name type="common">Chlamydophila abortus</name>
    <dbReference type="NCBI Taxonomy" id="218497"/>
    <lineage>
        <taxon>Bacteria</taxon>
        <taxon>Pseudomonadati</taxon>
        <taxon>Chlamydiota</taxon>
        <taxon>Chlamydiia</taxon>
        <taxon>Chlamydiales</taxon>
        <taxon>Chlamydiaceae</taxon>
        <taxon>Chlamydia/Chlamydophila group</taxon>
        <taxon>Chlamydia</taxon>
    </lineage>
</organism>
<sequence length="326" mass="37619">MKKNYYALAYYYLTRVDNPQQEIALHKELFKDLDVSCRIYISEQGINGQFSGYQPDAEYYMNWLRQRPGFSNVKFKIHHIEENIFPRVTVKYRKELVALGCDVDLSNQGKHISPQEWHEKLEENRCLVLDVRNNYEWKIGHFENAVLPDIRTFREFPDYAEQLSKEHDPATTPVMMYCTGGIRCELYSSLLLEKGFKEVYQLDGGVIAYGQAVGTGKWRGKLFVFDDRLAVPIDEADTDVPPIASCSHCETPCDTYYNCANTDCNNLFICCKECIHSTKGCCSQECSQAPRIRSFAPCRGNKPFRRMHLCEVTKEKEEAASSCCLH</sequence>
<accession>Q5L7A0</accession>
<dbReference type="EC" id="1.14.-.-" evidence="1"/>
<dbReference type="EMBL" id="CR848038">
    <property type="protein sequence ID" value="CAH63468.1"/>
    <property type="molecule type" value="Genomic_DNA"/>
</dbReference>
<dbReference type="RefSeq" id="WP_011096763.1">
    <property type="nucleotide sequence ID" value="NC_004552.2"/>
</dbReference>
<dbReference type="SMR" id="Q5L7A0"/>
<dbReference type="KEGG" id="cab:CAB010"/>
<dbReference type="eggNOG" id="COG1054">
    <property type="taxonomic scope" value="Bacteria"/>
</dbReference>
<dbReference type="HOGENOM" id="CLU_038878_1_0_0"/>
<dbReference type="OrthoDB" id="9778326at2"/>
<dbReference type="Proteomes" id="UP000001012">
    <property type="component" value="Chromosome"/>
</dbReference>
<dbReference type="GO" id="GO:0016705">
    <property type="term" value="F:oxidoreductase activity, acting on paired donors, with incorporation or reduction of molecular oxygen"/>
    <property type="evidence" value="ECO:0007669"/>
    <property type="project" value="UniProtKB-UniRule"/>
</dbReference>
<dbReference type="GO" id="GO:0006400">
    <property type="term" value="P:tRNA modification"/>
    <property type="evidence" value="ECO:0007669"/>
    <property type="project" value="UniProtKB-UniRule"/>
</dbReference>
<dbReference type="CDD" id="cd01518">
    <property type="entry name" value="RHOD_YceA"/>
    <property type="match status" value="1"/>
</dbReference>
<dbReference type="Gene3D" id="3.30.70.100">
    <property type="match status" value="1"/>
</dbReference>
<dbReference type="Gene3D" id="3.40.250.10">
    <property type="entry name" value="Rhodanese-like domain"/>
    <property type="match status" value="1"/>
</dbReference>
<dbReference type="HAMAP" id="MF_00469">
    <property type="entry name" value="TrhO"/>
    <property type="match status" value="1"/>
</dbReference>
<dbReference type="InterPro" id="IPR001763">
    <property type="entry name" value="Rhodanese-like_dom"/>
</dbReference>
<dbReference type="InterPro" id="IPR036873">
    <property type="entry name" value="Rhodanese-like_dom_sf"/>
</dbReference>
<dbReference type="InterPro" id="IPR022111">
    <property type="entry name" value="Rhodanese_C"/>
</dbReference>
<dbReference type="InterPro" id="IPR020936">
    <property type="entry name" value="TrhO"/>
</dbReference>
<dbReference type="InterPro" id="IPR040503">
    <property type="entry name" value="TRHO_N"/>
</dbReference>
<dbReference type="NCBIfam" id="NF001134">
    <property type="entry name" value="PRK00142.1-2"/>
    <property type="match status" value="1"/>
</dbReference>
<dbReference type="NCBIfam" id="NF001135">
    <property type="entry name" value="PRK00142.1-3"/>
    <property type="match status" value="1"/>
</dbReference>
<dbReference type="PANTHER" id="PTHR43268:SF3">
    <property type="entry name" value="RHODANESE-LIKE DOMAIN-CONTAINING PROTEIN 7-RELATED"/>
    <property type="match status" value="1"/>
</dbReference>
<dbReference type="PANTHER" id="PTHR43268">
    <property type="entry name" value="THIOSULFATE SULFURTRANSFERASE/RHODANESE-LIKE DOMAIN-CONTAINING PROTEIN 2"/>
    <property type="match status" value="1"/>
</dbReference>
<dbReference type="Pfam" id="PF00581">
    <property type="entry name" value="Rhodanese"/>
    <property type="match status" value="1"/>
</dbReference>
<dbReference type="Pfam" id="PF12368">
    <property type="entry name" value="Rhodanese_C"/>
    <property type="match status" value="1"/>
</dbReference>
<dbReference type="Pfam" id="PF17773">
    <property type="entry name" value="UPF0176_N"/>
    <property type="match status" value="1"/>
</dbReference>
<dbReference type="SMART" id="SM00450">
    <property type="entry name" value="RHOD"/>
    <property type="match status" value="1"/>
</dbReference>
<dbReference type="SUPFAM" id="SSF52821">
    <property type="entry name" value="Rhodanese/Cell cycle control phosphatase"/>
    <property type="match status" value="1"/>
</dbReference>
<dbReference type="PROSITE" id="PS50206">
    <property type="entry name" value="RHODANESE_3"/>
    <property type="match status" value="1"/>
</dbReference>
<evidence type="ECO:0000255" key="1">
    <source>
        <dbReference type="HAMAP-Rule" id="MF_00469"/>
    </source>
</evidence>
<protein>
    <recommendedName>
        <fullName evidence="1">tRNA uridine(34) hydroxylase</fullName>
        <ecNumber evidence="1">1.14.-.-</ecNumber>
    </recommendedName>
    <alternativeName>
        <fullName evidence="1">tRNA hydroxylation protein O</fullName>
    </alternativeName>
</protein>